<dbReference type="EC" id="2.7.8.13" evidence="1"/>
<dbReference type="EMBL" id="AM920689">
    <property type="protein sequence ID" value="CAP52998.1"/>
    <property type="molecule type" value="Genomic_DNA"/>
</dbReference>
<dbReference type="SMR" id="B0RVA7"/>
<dbReference type="KEGG" id="xca:xcc-b100_3633"/>
<dbReference type="HOGENOM" id="CLU_023982_0_0_6"/>
<dbReference type="UniPathway" id="UPA00219"/>
<dbReference type="Proteomes" id="UP000001188">
    <property type="component" value="Chromosome"/>
</dbReference>
<dbReference type="GO" id="GO:0005886">
    <property type="term" value="C:plasma membrane"/>
    <property type="evidence" value="ECO:0007669"/>
    <property type="project" value="UniProtKB-SubCell"/>
</dbReference>
<dbReference type="GO" id="GO:0046872">
    <property type="term" value="F:metal ion binding"/>
    <property type="evidence" value="ECO:0007669"/>
    <property type="project" value="UniProtKB-KW"/>
</dbReference>
<dbReference type="GO" id="GO:0008963">
    <property type="term" value="F:phospho-N-acetylmuramoyl-pentapeptide-transferase activity"/>
    <property type="evidence" value="ECO:0007669"/>
    <property type="project" value="UniProtKB-UniRule"/>
</dbReference>
<dbReference type="GO" id="GO:0051992">
    <property type="term" value="F:UDP-N-acetylmuramoyl-L-alanyl-D-glutamyl-meso-2,6-diaminopimelyl-D-alanyl-D-alanine:undecaprenyl-phosphate transferase activity"/>
    <property type="evidence" value="ECO:0007669"/>
    <property type="project" value="RHEA"/>
</dbReference>
<dbReference type="GO" id="GO:0051301">
    <property type="term" value="P:cell division"/>
    <property type="evidence" value="ECO:0007669"/>
    <property type="project" value="UniProtKB-KW"/>
</dbReference>
<dbReference type="GO" id="GO:0071555">
    <property type="term" value="P:cell wall organization"/>
    <property type="evidence" value="ECO:0007669"/>
    <property type="project" value="UniProtKB-KW"/>
</dbReference>
<dbReference type="GO" id="GO:0009252">
    <property type="term" value="P:peptidoglycan biosynthetic process"/>
    <property type="evidence" value="ECO:0007669"/>
    <property type="project" value="UniProtKB-UniRule"/>
</dbReference>
<dbReference type="GO" id="GO:0008360">
    <property type="term" value="P:regulation of cell shape"/>
    <property type="evidence" value="ECO:0007669"/>
    <property type="project" value="UniProtKB-KW"/>
</dbReference>
<dbReference type="CDD" id="cd06852">
    <property type="entry name" value="GT_MraY"/>
    <property type="match status" value="1"/>
</dbReference>
<dbReference type="HAMAP" id="MF_00038">
    <property type="entry name" value="MraY"/>
    <property type="match status" value="1"/>
</dbReference>
<dbReference type="InterPro" id="IPR000715">
    <property type="entry name" value="Glycosyl_transferase_4"/>
</dbReference>
<dbReference type="InterPro" id="IPR003524">
    <property type="entry name" value="PNAcMuramoyl-5peptid_Trfase"/>
</dbReference>
<dbReference type="InterPro" id="IPR018480">
    <property type="entry name" value="PNAcMuramoyl-5peptid_Trfase_CS"/>
</dbReference>
<dbReference type="NCBIfam" id="TIGR00445">
    <property type="entry name" value="mraY"/>
    <property type="match status" value="1"/>
</dbReference>
<dbReference type="PANTHER" id="PTHR22926">
    <property type="entry name" value="PHOSPHO-N-ACETYLMURAMOYL-PENTAPEPTIDE-TRANSFERASE"/>
    <property type="match status" value="1"/>
</dbReference>
<dbReference type="PANTHER" id="PTHR22926:SF5">
    <property type="entry name" value="PHOSPHO-N-ACETYLMURAMOYL-PENTAPEPTIDE-TRANSFERASE HOMOLOG"/>
    <property type="match status" value="1"/>
</dbReference>
<dbReference type="Pfam" id="PF00953">
    <property type="entry name" value="Glycos_transf_4"/>
    <property type="match status" value="1"/>
</dbReference>
<dbReference type="PROSITE" id="PS01347">
    <property type="entry name" value="MRAY_1"/>
    <property type="match status" value="1"/>
</dbReference>
<dbReference type="PROSITE" id="PS01348">
    <property type="entry name" value="MRAY_2"/>
    <property type="match status" value="1"/>
</dbReference>
<protein>
    <recommendedName>
        <fullName evidence="1">Phospho-N-acetylmuramoyl-pentapeptide-transferase</fullName>
        <ecNumber evidence="1">2.7.8.13</ecNumber>
    </recommendedName>
    <alternativeName>
        <fullName evidence="1">UDP-MurNAc-pentapeptide phosphotransferase</fullName>
    </alternativeName>
</protein>
<name>MRAY_XANCB</name>
<organism>
    <name type="scientific">Xanthomonas campestris pv. campestris (strain B100)</name>
    <dbReference type="NCBI Taxonomy" id="509169"/>
    <lineage>
        <taxon>Bacteria</taxon>
        <taxon>Pseudomonadati</taxon>
        <taxon>Pseudomonadota</taxon>
        <taxon>Gammaproteobacteria</taxon>
        <taxon>Lysobacterales</taxon>
        <taxon>Lysobacteraceae</taxon>
        <taxon>Xanthomonas</taxon>
    </lineage>
</organism>
<proteinExistence type="inferred from homology"/>
<accession>B0RVA7</accession>
<reference key="1">
    <citation type="journal article" date="2008" name="J. Biotechnol.">
        <title>The genome of Xanthomonas campestris pv. campestris B100 and its use for the reconstruction of metabolic pathways involved in xanthan biosynthesis.</title>
        <authorList>
            <person name="Vorhoelter F.-J."/>
            <person name="Schneiker S."/>
            <person name="Goesmann A."/>
            <person name="Krause L."/>
            <person name="Bekel T."/>
            <person name="Kaiser O."/>
            <person name="Linke B."/>
            <person name="Patschkowski T."/>
            <person name="Rueckert C."/>
            <person name="Schmid J."/>
            <person name="Sidhu V.K."/>
            <person name="Sieber V."/>
            <person name="Tauch A."/>
            <person name="Watt S.A."/>
            <person name="Weisshaar B."/>
            <person name="Becker A."/>
            <person name="Niehaus K."/>
            <person name="Puehler A."/>
        </authorList>
    </citation>
    <scope>NUCLEOTIDE SEQUENCE [LARGE SCALE GENOMIC DNA]</scope>
    <source>
        <strain>B100</strain>
    </source>
</reference>
<evidence type="ECO:0000255" key="1">
    <source>
        <dbReference type="HAMAP-Rule" id="MF_00038"/>
    </source>
</evidence>
<keyword id="KW-0131">Cell cycle</keyword>
<keyword id="KW-0132">Cell division</keyword>
<keyword id="KW-0997">Cell inner membrane</keyword>
<keyword id="KW-1003">Cell membrane</keyword>
<keyword id="KW-0133">Cell shape</keyword>
<keyword id="KW-0961">Cell wall biogenesis/degradation</keyword>
<keyword id="KW-0460">Magnesium</keyword>
<keyword id="KW-0472">Membrane</keyword>
<keyword id="KW-0479">Metal-binding</keyword>
<keyword id="KW-0573">Peptidoglycan synthesis</keyword>
<keyword id="KW-0808">Transferase</keyword>
<keyword id="KW-0812">Transmembrane</keyword>
<keyword id="KW-1133">Transmembrane helix</keyword>
<gene>
    <name evidence="1" type="primary">mraY</name>
    <name type="ordered locus">xcc-b100_3633</name>
</gene>
<sequence length="361" mass="39607">MLLELARWLQQLESLFGLFNYLTFRGILAALTALFLSLWMGPAVIRKLAQFKGGQPIRQDGPQTHFSKAGTPTMGGSLILLTVTLSVLLWGDLRNRYVWLVLAVMICFGAIGWYDDWIKIVRRDPNGLKSRWKYLLQSIFGLAAGLFLYYTADVPAAITFYIPMFKAIALPLAGVSFVVIAYFWIVGFSNAVNLTDGLDGLAIMPTVLVACALGVFAYASGNVVFAEYLKIPLIPGAGELIIICSAIAGAGLGFLWFNTYPAMVFMGDIGALSLGAVLGTVAVIVRQELVLVIMGGVFVIETLSVMIQVASFKLTGKRVFRMAPIHHHFELKGWPEPRVIVRFWIISVVLVLIGLATLKVR</sequence>
<feature type="chain" id="PRO_1000090687" description="Phospho-N-acetylmuramoyl-pentapeptide-transferase">
    <location>
        <begin position="1"/>
        <end position="361"/>
    </location>
</feature>
<feature type="transmembrane region" description="Helical" evidence="1">
    <location>
        <begin position="25"/>
        <end position="45"/>
    </location>
</feature>
<feature type="transmembrane region" description="Helical" evidence="1">
    <location>
        <begin position="73"/>
        <end position="93"/>
    </location>
</feature>
<feature type="transmembrane region" description="Helical" evidence="1">
    <location>
        <begin position="98"/>
        <end position="118"/>
    </location>
</feature>
<feature type="transmembrane region" description="Helical" evidence="1">
    <location>
        <begin position="139"/>
        <end position="159"/>
    </location>
</feature>
<feature type="transmembrane region" description="Helical" evidence="1">
    <location>
        <begin position="168"/>
        <end position="188"/>
    </location>
</feature>
<feature type="transmembrane region" description="Helical" evidence="1">
    <location>
        <begin position="200"/>
        <end position="220"/>
    </location>
</feature>
<feature type="transmembrane region" description="Helical" evidence="1">
    <location>
        <begin position="237"/>
        <end position="257"/>
    </location>
</feature>
<feature type="transmembrane region" description="Helical" evidence="1">
    <location>
        <begin position="264"/>
        <end position="284"/>
    </location>
</feature>
<feature type="transmembrane region" description="Helical" evidence="1">
    <location>
        <begin position="289"/>
        <end position="309"/>
    </location>
</feature>
<feature type="transmembrane region" description="Helical" evidence="1">
    <location>
        <begin position="339"/>
        <end position="359"/>
    </location>
</feature>
<comment type="function">
    <text evidence="1">Catalyzes the initial step of the lipid cycle reactions in the biosynthesis of the cell wall peptidoglycan: transfers peptidoglycan precursor phospho-MurNAc-pentapeptide from UDP-MurNAc-pentapeptide onto the lipid carrier undecaprenyl phosphate, yielding undecaprenyl-pyrophosphoryl-MurNAc-pentapeptide, known as lipid I.</text>
</comment>
<comment type="catalytic activity">
    <reaction evidence="1">
        <text>UDP-N-acetyl-alpha-D-muramoyl-L-alanyl-gamma-D-glutamyl-meso-2,6-diaminopimeloyl-D-alanyl-D-alanine + di-trans,octa-cis-undecaprenyl phosphate = di-trans,octa-cis-undecaprenyl diphospho-N-acetyl-alpha-D-muramoyl-L-alanyl-D-glutamyl-meso-2,6-diaminopimeloyl-D-alanyl-D-alanine + UMP</text>
        <dbReference type="Rhea" id="RHEA:28386"/>
        <dbReference type="ChEBI" id="CHEBI:57865"/>
        <dbReference type="ChEBI" id="CHEBI:60392"/>
        <dbReference type="ChEBI" id="CHEBI:61386"/>
        <dbReference type="ChEBI" id="CHEBI:61387"/>
        <dbReference type="EC" id="2.7.8.13"/>
    </reaction>
</comment>
<comment type="cofactor">
    <cofactor evidence="1">
        <name>Mg(2+)</name>
        <dbReference type="ChEBI" id="CHEBI:18420"/>
    </cofactor>
</comment>
<comment type="pathway">
    <text evidence="1">Cell wall biogenesis; peptidoglycan biosynthesis.</text>
</comment>
<comment type="subcellular location">
    <subcellularLocation>
        <location evidence="1">Cell inner membrane</location>
        <topology evidence="1">Multi-pass membrane protein</topology>
    </subcellularLocation>
</comment>
<comment type="similarity">
    <text evidence="1">Belongs to the glycosyltransferase 4 family. MraY subfamily.</text>
</comment>